<name>NUOC_MYCS2</name>
<organism>
    <name type="scientific">Mycolicibacterium smegmatis (strain ATCC 700084 / mc(2)155)</name>
    <name type="common">Mycobacterium smegmatis</name>
    <dbReference type="NCBI Taxonomy" id="246196"/>
    <lineage>
        <taxon>Bacteria</taxon>
        <taxon>Bacillati</taxon>
        <taxon>Actinomycetota</taxon>
        <taxon>Actinomycetes</taxon>
        <taxon>Mycobacteriales</taxon>
        <taxon>Mycobacteriaceae</taxon>
        <taxon>Mycolicibacterium</taxon>
    </lineage>
</organism>
<accession>A0QU34</accession>
<accession>I7FZB4</accession>
<reference key="1">
    <citation type="submission" date="2006-10" db="EMBL/GenBank/DDBJ databases">
        <authorList>
            <person name="Fleischmann R.D."/>
            <person name="Dodson R.J."/>
            <person name="Haft D.H."/>
            <person name="Merkel J.S."/>
            <person name="Nelson W.C."/>
            <person name="Fraser C.M."/>
        </authorList>
    </citation>
    <scope>NUCLEOTIDE SEQUENCE [LARGE SCALE GENOMIC DNA]</scope>
    <source>
        <strain>ATCC 700084 / mc(2)155</strain>
    </source>
</reference>
<reference key="2">
    <citation type="journal article" date="2007" name="Genome Biol.">
        <title>Interrupted coding sequences in Mycobacterium smegmatis: authentic mutations or sequencing errors?</title>
        <authorList>
            <person name="Deshayes C."/>
            <person name="Perrodou E."/>
            <person name="Gallien S."/>
            <person name="Euphrasie D."/>
            <person name="Schaeffer C."/>
            <person name="Van-Dorsselaer A."/>
            <person name="Poch O."/>
            <person name="Lecompte O."/>
            <person name="Reyrat J.-M."/>
        </authorList>
    </citation>
    <scope>NUCLEOTIDE SEQUENCE [LARGE SCALE GENOMIC DNA]</scope>
    <source>
        <strain>ATCC 700084 / mc(2)155</strain>
    </source>
</reference>
<reference key="3">
    <citation type="journal article" date="2009" name="Genome Res.">
        <title>Ortho-proteogenomics: multiple proteomes investigation through orthology and a new MS-based protocol.</title>
        <authorList>
            <person name="Gallien S."/>
            <person name="Perrodou E."/>
            <person name="Carapito C."/>
            <person name="Deshayes C."/>
            <person name="Reyrat J.-M."/>
            <person name="Van Dorsselaer A."/>
            <person name="Poch O."/>
            <person name="Schaeffer C."/>
            <person name="Lecompte O."/>
        </authorList>
    </citation>
    <scope>NUCLEOTIDE SEQUENCE [LARGE SCALE GENOMIC DNA]</scope>
    <source>
        <strain>ATCC 700084 / mc(2)155</strain>
    </source>
</reference>
<protein>
    <recommendedName>
        <fullName evidence="1">NADH-quinone oxidoreductase subunit C</fullName>
        <ecNumber evidence="1">7.1.1.-</ecNumber>
    </recommendedName>
    <alternativeName>
        <fullName evidence="1">NADH dehydrogenase I subunit C</fullName>
    </alternativeName>
    <alternativeName>
        <fullName evidence="1">NDH-1 subunit C</fullName>
    </alternativeName>
</protein>
<proteinExistence type="evidence at protein level"/>
<gene>
    <name evidence="1" type="primary">nuoC</name>
    <name type="ordered locus">MSMEG_2061</name>
    <name type="ordered locus">MSMEI_2016</name>
</gene>
<keyword id="KW-0002">3D-structure</keyword>
<keyword id="KW-1003">Cell membrane</keyword>
<keyword id="KW-0472">Membrane</keyword>
<keyword id="KW-0520">NAD</keyword>
<keyword id="KW-0874">Quinone</keyword>
<keyword id="KW-1185">Reference proteome</keyword>
<keyword id="KW-1278">Translocase</keyword>
<keyword id="KW-0813">Transport</keyword>
<dbReference type="EC" id="7.1.1.-" evidence="1"/>
<dbReference type="EMBL" id="CP000480">
    <property type="protein sequence ID" value="ABK70554.1"/>
    <property type="molecule type" value="Genomic_DNA"/>
</dbReference>
<dbReference type="EMBL" id="CP001663">
    <property type="protein sequence ID" value="AFP38487.1"/>
    <property type="molecule type" value="Genomic_DNA"/>
</dbReference>
<dbReference type="RefSeq" id="WP_011728124.1">
    <property type="nucleotide sequence ID" value="NZ_SIJM01000021.1"/>
</dbReference>
<dbReference type="RefSeq" id="YP_886422.1">
    <property type="nucleotide sequence ID" value="NC_008596.1"/>
</dbReference>
<dbReference type="PDB" id="8E9G">
    <property type="method" value="EM"/>
    <property type="resolution" value="2.60 A"/>
    <property type="chains" value="C=1-238"/>
</dbReference>
<dbReference type="PDB" id="8E9H">
    <property type="method" value="EM"/>
    <property type="resolution" value="2.70 A"/>
    <property type="chains" value="C=1-238"/>
</dbReference>
<dbReference type="PDB" id="8E9I">
    <property type="method" value="EM"/>
    <property type="resolution" value="2.80 A"/>
    <property type="chains" value="C=1-238"/>
</dbReference>
<dbReference type="PDBsum" id="8E9G"/>
<dbReference type="PDBsum" id="8E9H"/>
<dbReference type="PDBsum" id="8E9I"/>
<dbReference type="EMDB" id="EMD-27963"/>
<dbReference type="EMDB" id="EMD-27964"/>
<dbReference type="EMDB" id="EMD-27965"/>
<dbReference type="SMR" id="A0QU34"/>
<dbReference type="STRING" id="246196.MSMEG_2061"/>
<dbReference type="PaxDb" id="246196-MSMEI_2016"/>
<dbReference type="KEGG" id="msb:LJ00_10275"/>
<dbReference type="KEGG" id="msg:MSMEI_2016"/>
<dbReference type="KEGG" id="msm:MSMEG_2061"/>
<dbReference type="PATRIC" id="fig|246196.19.peg.2037"/>
<dbReference type="eggNOG" id="COG0852">
    <property type="taxonomic scope" value="Bacteria"/>
</dbReference>
<dbReference type="OrthoDB" id="9803286at2"/>
<dbReference type="Proteomes" id="UP000000757">
    <property type="component" value="Chromosome"/>
</dbReference>
<dbReference type="Proteomes" id="UP000006158">
    <property type="component" value="Chromosome"/>
</dbReference>
<dbReference type="GO" id="GO:0005886">
    <property type="term" value="C:plasma membrane"/>
    <property type="evidence" value="ECO:0007669"/>
    <property type="project" value="UniProtKB-SubCell"/>
</dbReference>
<dbReference type="GO" id="GO:0008137">
    <property type="term" value="F:NADH dehydrogenase (ubiquinone) activity"/>
    <property type="evidence" value="ECO:0007669"/>
    <property type="project" value="InterPro"/>
</dbReference>
<dbReference type="GO" id="GO:0050136">
    <property type="term" value="F:NADH:ubiquinone reductase (non-electrogenic) activity"/>
    <property type="evidence" value="ECO:0007669"/>
    <property type="project" value="UniProtKB-UniRule"/>
</dbReference>
<dbReference type="GO" id="GO:0048038">
    <property type="term" value="F:quinone binding"/>
    <property type="evidence" value="ECO:0007669"/>
    <property type="project" value="UniProtKB-KW"/>
</dbReference>
<dbReference type="Gene3D" id="3.30.460.80">
    <property type="entry name" value="NADH:ubiquinone oxidoreductase, 30kDa subunit"/>
    <property type="match status" value="1"/>
</dbReference>
<dbReference type="HAMAP" id="MF_01357">
    <property type="entry name" value="NDH1_NuoC"/>
    <property type="match status" value="1"/>
</dbReference>
<dbReference type="InterPro" id="IPR010218">
    <property type="entry name" value="NADH_DH_suC"/>
</dbReference>
<dbReference type="InterPro" id="IPR037232">
    <property type="entry name" value="NADH_quin_OxRdtase_su_C/D-like"/>
</dbReference>
<dbReference type="InterPro" id="IPR001268">
    <property type="entry name" value="NADH_UbQ_OxRdtase_30kDa_su"/>
</dbReference>
<dbReference type="NCBIfam" id="TIGR01961">
    <property type="entry name" value="NuoC_fam"/>
    <property type="match status" value="1"/>
</dbReference>
<dbReference type="NCBIfam" id="NF005856">
    <property type="entry name" value="PRK07785.1"/>
    <property type="match status" value="1"/>
</dbReference>
<dbReference type="PANTHER" id="PTHR10884:SF14">
    <property type="entry name" value="NADH DEHYDROGENASE [UBIQUINONE] IRON-SULFUR PROTEIN 3, MITOCHONDRIAL"/>
    <property type="match status" value="1"/>
</dbReference>
<dbReference type="PANTHER" id="PTHR10884">
    <property type="entry name" value="NADH DEHYDROGENASE UBIQUINONE IRON-SULFUR PROTEIN 3"/>
    <property type="match status" value="1"/>
</dbReference>
<dbReference type="Pfam" id="PF00329">
    <property type="entry name" value="Complex1_30kDa"/>
    <property type="match status" value="1"/>
</dbReference>
<dbReference type="SUPFAM" id="SSF143243">
    <property type="entry name" value="Nqo5-like"/>
    <property type="match status" value="1"/>
</dbReference>
<evidence type="ECO:0000255" key="1">
    <source>
        <dbReference type="HAMAP-Rule" id="MF_01357"/>
    </source>
</evidence>
<evidence type="ECO:0000256" key="2">
    <source>
        <dbReference type="SAM" id="MobiDB-lite"/>
    </source>
</evidence>
<evidence type="ECO:0007829" key="3">
    <source>
        <dbReference type="PDB" id="8E9G"/>
    </source>
</evidence>
<evidence type="ECO:0007829" key="4">
    <source>
        <dbReference type="PDB" id="8E9H"/>
    </source>
</evidence>
<comment type="function">
    <text evidence="1">NDH-1 shuttles electrons from NADH, via FMN and iron-sulfur (Fe-S) centers, to quinones in the respiratory chain. The immediate electron acceptor for the enzyme in this species is believed to be a menaquinone. Couples the redox reaction to proton translocation (for every two electrons transferred, four hydrogen ions are translocated across the cytoplasmic membrane), and thus conserves the redox energy in a proton gradient.</text>
</comment>
<comment type="catalytic activity">
    <reaction evidence="1">
        <text>a quinone + NADH + 5 H(+)(in) = a quinol + NAD(+) + 4 H(+)(out)</text>
        <dbReference type="Rhea" id="RHEA:57888"/>
        <dbReference type="ChEBI" id="CHEBI:15378"/>
        <dbReference type="ChEBI" id="CHEBI:24646"/>
        <dbReference type="ChEBI" id="CHEBI:57540"/>
        <dbReference type="ChEBI" id="CHEBI:57945"/>
        <dbReference type="ChEBI" id="CHEBI:132124"/>
    </reaction>
</comment>
<comment type="subunit">
    <text evidence="1">NDH-1 is composed of 14 different subunits. Subunits NuoB, C, D, E, F, and G constitute the peripheral sector of the complex.</text>
</comment>
<comment type="subcellular location">
    <subcellularLocation>
        <location evidence="1">Cell membrane</location>
        <topology evidence="1">Peripheral membrane protein</topology>
        <orientation evidence="1">Cytoplasmic side</orientation>
    </subcellularLocation>
</comment>
<comment type="similarity">
    <text evidence="1">Belongs to the complex I 30 kDa subunit family.</text>
</comment>
<sequence length="238" mass="26580">MSTSNGSANGTNGVGLPRGDEPEIIAVRRGMFGNRDTGDTSGYGRLVRPVALPGSTPRPYGGYFDAVMDRLAEVLGEERYAMSIERVVVYRDQLTIEVSRVQLPAVASVLRDDPDLRFELCLGVSGVHYPEDTGRELHAVYPLMSITHNRRIQLEVAAPDADPHIPSLYAVYPTTDWHERETYDFFGIIFDGHPSLTRIEMPDDWEGHPQRKDYPLGGIPVEYHGAQIPPPDQRRSYS</sequence>
<feature type="chain" id="PRO_0000358137" description="NADH-quinone oxidoreductase subunit C">
    <location>
        <begin position="1"/>
        <end position="238"/>
    </location>
</feature>
<feature type="region of interest" description="Disordered" evidence="2">
    <location>
        <begin position="1"/>
        <end position="20"/>
    </location>
</feature>
<feature type="compositionally biased region" description="Polar residues" evidence="2">
    <location>
        <begin position="1"/>
        <end position="11"/>
    </location>
</feature>
<feature type="strand" evidence="3">
    <location>
        <begin position="23"/>
        <end position="30"/>
    </location>
</feature>
<feature type="helix" evidence="3">
    <location>
        <begin position="31"/>
        <end position="33"/>
    </location>
</feature>
<feature type="strand" evidence="3">
    <location>
        <begin position="34"/>
        <end position="37"/>
    </location>
</feature>
<feature type="strand" evidence="3">
    <location>
        <begin position="47"/>
        <end position="52"/>
    </location>
</feature>
<feature type="helix" evidence="3">
    <location>
        <begin position="64"/>
        <end position="74"/>
    </location>
</feature>
<feature type="helix" evidence="3">
    <location>
        <begin position="77"/>
        <end position="83"/>
    </location>
</feature>
<feature type="strand" evidence="3">
    <location>
        <begin position="84"/>
        <end position="90"/>
    </location>
</feature>
<feature type="strand" evidence="3">
    <location>
        <begin position="93"/>
        <end position="98"/>
    </location>
</feature>
<feature type="helix" evidence="3">
    <location>
        <begin position="103"/>
        <end position="112"/>
    </location>
</feature>
<feature type="turn" evidence="3">
    <location>
        <begin position="114"/>
        <end position="116"/>
    </location>
</feature>
<feature type="strand" evidence="3">
    <location>
        <begin position="125"/>
        <end position="128"/>
    </location>
</feature>
<feature type="strand" evidence="3">
    <location>
        <begin position="137"/>
        <end position="145"/>
    </location>
</feature>
<feature type="turn" evidence="3">
    <location>
        <begin position="146"/>
        <end position="149"/>
    </location>
</feature>
<feature type="strand" evidence="3">
    <location>
        <begin position="150"/>
        <end position="158"/>
    </location>
</feature>
<feature type="strand" evidence="3">
    <location>
        <begin position="160"/>
        <end position="162"/>
    </location>
</feature>
<feature type="strand" evidence="4">
    <location>
        <begin position="164"/>
        <end position="166"/>
    </location>
</feature>
<feature type="turn" evidence="3">
    <location>
        <begin position="169"/>
        <end position="171"/>
    </location>
</feature>
<feature type="helix" evidence="3">
    <location>
        <begin position="173"/>
        <end position="175"/>
    </location>
</feature>
<feature type="helix" evidence="3">
    <location>
        <begin position="178"/>
        <end position="186"/>
    </location>
</feature>
<feature type="strand" evidence="4">
    <location>
        <begin position="189"/>
        <end position="191"/>
    </location>
</feature>
<feature type="strand" evidence="3">
    <location>
        <begin position="199"/>
        <end position="201"/>
    </location>
</feature>
<feature type="strand" evidence="3">
    <location>
        <begin position="221"/>
        <end position="223"/>
    </location>
</feature>
<feature type="strand" evidence="3">
    <location>
        <begin position="226"/>
        <end position="228"/>
    </location>
</feature>
<feature type="turn" evidence="3">
    <location>
        <begin position="231"/>
        <end position="233"/>
    </location>
</feature>